<name>MDS3_CANAL</name>
<keyword id="KW-0963">Cytoplasm</keyword>
<keyword id="KW-0880">Kelch repeat</keyword>
<keyword id="KW-0469">Meiosis</keyword>
<keyword id="KW-1185">Reference proteome</keyword>
<keyword id="KW-0677">Repeat</keyword>
<keyword id="KW-0749">Sporulation</keyword>
<keyword id="KW-0843">Virulence</keyword>
<gene>
    <name type="primary">MDS3</name>
    <name type="ordered locus">CAALFM_C307320WA</name>
    <name type="ORF">CaO19.14052/14051</name>
    <name type="ORF">CaO19.6760/6759</name>
</gene>
<evidence type="ECO:0000250" key="1"/>
<evidence type="ECO:0000255" key="2"/>
<evidence type="ECO:0000256" key="3">
    <source>
        <dbReference type="SAM" id="MobiDB-lite"/>
    </source>
</evidence>
<evidence type="ECO:0000269" key="4">
    <source>
    </source>
</evidence>
<evidence type="ECO:0000269" key="5">
    <source>
    </source>
</evidence>
<evidence type="ECO:0000269" key="6">
    <source>
    </source>
</evidence>
<evidence type="ECO:0000269" key="7">
    <source>
    </source>
</evidence>
<evidence type="ECO:0000269" key="8">
    <source>
    </source>
</evidence>
<comment type="function">
    <text evidence="1 4 5 6 8">Negatively regulates early sporulation-specific genes (By similarity). TOR signaling pathway component that contributes to morphogenesis as a regulator of this key morphogenetic pathway. Required for growth and hyphal formation at pH 9, for full virulence in a mouse model of systemic infection and for biofilm formation. Involved in chlamydospore formation, distinctive morphological feature of the fungal pathogen C.albicans that can be induced to form in oxygen-limited environments and has been reported in clinical specimens.</text>
</comment>
<comment type="subunit">
    <text evidence="8">Interacts with SIT4.</text>
</comment>
<comment type="subcellular location">
    <subcellularLocation>
        <location evidence="1">Cytoplasm</location>
    </subcellularLocation>
</comment>
<comment type="disruption phenotype">
    <text evidence="7">Results in attenuated keratomycosis.</text>
</comment>
<organism>
    <name type="scientific">Candida albicans (strain SC5314 / ATCC MYA-2876)</name>
    <name type="common">Yeast</name>
    <dbReference type="NCBI Taxonomy" id="237561"/>
    <lineage>
        <taxon>Eukaryota</taxon>
        <taxon>Fungi</taxon>
        <taxon>Dikarya</taxon>
        <taxon>Ascomycota</taxon>
        <taxon>Saccharomycotina</taxon>
        <taxon>Pichiomycetes</taxon>
        <taxon>Debaryomycetaceae</taxon>
        <taxon>Candida/Lodderomyces clade</taxon>
        <taxon>Candida</taxon>
    </lineage>
</organism>
<reference key="1">
    <citation type="journal article" date="2004" name="Proc. Natl. Acad. Sci. U.S.A.">
        <title>The diploid genome sequence of Candida albicans.</title>
        <authorList>
            <person name="Jones T."/>
            <person name="Federspiel N.A."/>
            <person name="Chibana H."/>
            <person name="Dungan J."/>
            <person name="Kalman S."/>
            <person name="Magee B.B."/>
            <person name="Newport G."/>
            <person name="Thorstenson Y.R."/>
            <person name="Agabian N."/>
            <person name="Magee P.T."/>
            <person name="Davis R.W."/>
            <person name="Scherer S."/>
        </authorList>
    </citation>
    <scope>NUCLEOTIDE SEQUENCE [LARGE SCALE GENOMIC DNA]</scope>
    <source>
        <strain>SC5314 / ATCC MYA-2876</strain>
    </source>
</reference>
<reference key="2">
    <citation type="journal article" date="2007" name="Genome Biol.">
        <title>Assembly of the Candida albicans genome into sixteen supercontigs aligned on the eight chromosomes.</title>
        <authorList>
            <person name="van het Hoog M."/>
            <person name="Rast T.J."/>
            <person name="Martchenko M."/>
            <person name="Grindle S."/>
            <person name="Dignard D."/>
            <person name="Hogues H."/>
            <person name="Cuomo C."/>
            <person name="Berriman M."/>
            <person name="Scherer S."/>
            <person name="Magee B.B."/>
            <person name="Whiteway M."/>
            <person name="Chibana H."/>
            <person name="Nantel A."/>
            <person name="Magee P.T."/>
        </authorList>
    </citation>
    <scope>GENOME REANNOTATION</scope>
    <source>
        <strain>SC5314 / ATCC MYA-2876</strain>
    </source>
</reference>
<reference key="3">
    <citation type="journal article" date="2013" name="Genome Biol.">
        <title>Assembly of a phased diploid Candida albicans genome facilitates allele-specific measurements and provides a simple model for repeat and indel structure.</title>
        <authorList>
            <person name="Muzzey D."/>
            <person name="Schwartz K."/>
            <person name="Weissman J.S."/>
            <person name="Sherlock G."/>
        </authorList>
    </citation>
    <scope>NUCLEOTIDE SEQUENCE [LARGE SCALE GENOMIC DNA]</scope>
    <scope>GENOME REANNOTATION</scope>
    <source>
        <strain>SC5314 / ATCC MYA-2876</strain>
    </source>
</reference>
<reference key="4">
    <citation type="journal article" date="2002" name="Genetics">
        <title>Candida albicans Mds3p, a conserved regulator of pH responses and virulence identified through insertional mutagenesis.</title>
        <authorList>
            <person name="Davis D.A."/>
            <person name="Bruno V.M."/>
            <person name="Loza L."/>
            <person name="Filler S.G."/>
            <person name="Mitchell A.P."/>
        </authorList>
    </citation>
    <scope>FUNCTION</scope>
</reference>
<reference key="5">
    <citation type="journal article" date="2003" name="Microbiology">
        <title>Genetic control of chlamydospore formation in Candida albicans.</title>
        <authorList>
            <person name="Nobile C.J."/>
            <person name="Bruno V.M."/>
            <person name="Richard M.L."/>
            <person name="Davis D.A."/>
            <person name="Mitchell A.P."/>
        </authorList>
    </citation>
    <scope>FUNCTION</scope>
</reference>
<reference key="6">
    <citation type="journal article" date="2005" name="Eukaryot. Cell">
        <title>Candida albicans biofilm-defective mutants.</title>
        <authorList>
            <person name="Richard M.L."/>
            <person name="Nobile C.J."/>
            <person name="Bruno V.M."/>
            <person name="Mitchell A.P."/>
        </authorList>
    </citation>
    <scope>FUNCTION</scope>
</reference>
<reference key="7">
    <citation type="journal article" date="2007" name="Microb. Pathog.">
        <title>Genetically regulated filamentation contributes to Candida albicans virulence during corneal infection.</title>
        <authorList>
            <person name="Jackson B.E."/>
            <person name="Wilhelmus K.R."/>
            <person name="Mitchell B.M."/>
        </authorList>
    </citation>
    <scope>DISRUPTION PHENOTYPE</scope>
    <scope>VIRULENCE</scope>
</reference>
<reference key="8">
    <citation type="journal article" date="2010" name="Mol. Cell. Biol.">
        <title>Mds3 regulates morphogenesis in Candida albicans through the TOR pathway.</title>
        <authorList>
            <person name="Zacchi L.F."/>
            <person name="Gomez-Raja J."/>
            <person name="Davis D.A."/>
        </authorList>
    </citation>
    <scope>FUNCTION</scope>
    <scope>INTERACTION WITH SIT4</scope>
</reference>
<accession>Q5ADT1</accession>
<accession>A0A1D8PKQ3</accession>
<protein>
    <recommendedName>
        <fullName>Negative regulator of sporulation MDS3</fullName>
    </recommendedName>
</protein>
<sequence length="1383" mass="153707">MSTLIPTASACYSLQLPPTEKDDRLNLNVRTGSASTLYNSLIFVHGGLTIGLELLNYTIPELNEIFYNRINISASKYKTVEKYLSGELFYLSLIERNWSRVVLEELEIRPKPRLLHQICAFNNCLYLFGGLALSQENDEDPTLVPCNDLWEFDLVLKKWTLLDDGSNYELDDAVPSPRFNHKLTVISSLSFANRKDHFGLFIAGGKDKQSNEIYDNSIFDLVEKRYVGSQPFRLVATTGDDTKDKETGLNEFVSNPEHFLNVDQTRNAILSITDDADTPNRKQNKNPSNHHESIVVYGPTRQTGDCQNSLVSFKVGKREIKGGKVLRLHKNSRVAKLKQSIIPYNLRYPTAGLFGQNVVLTGFLPDEYEISIFVYNRPTGKWSRLNIFCSHEYGSHRFWGGFAWQSHHKVILIGNSMTSRTTSSVRFFSIMLTVSLPITNILVSSELSKGRSNNRTSSFVSHGEQRHHRNKSQNDSLLKAELSLESTTEDSTDSSSDKTAESVLDAPVPLANSRRQSFSSLGSDKSPTAVSFSDYVHYAAPKTTYTTIRSVFPPEAITLGRNAFNRIGDLIADIELVSCNGDRIPVSSAVLMERWGQHFISLLAKGYINAVDKFETDQALGLDENQRLRSKSSNSESSSSDIPKLKLSLSESLLSSSSGEHDKKEKMGLSSAHKPQKDVPQFRLPFQDSSESVNREEGSDCSKDRKTGGSSVSTAIDPHHVMPRKNSTSSFQSNSSSLLTSHLQDIPPQLPLPDEQIPAVPAAPVSYRSASRKNSQDHSSPRSSLIHTLTVLRNIPVSKSPRESPFSSPRPSMSGPSGGSADLFSSPFPSLKANYGKPPSNLRKKSYDMNDGTIESSLDSFSSGKSSMAKVSSVPGENPDSDESSIGFQEFNKNPISMFDNALLNFDNIDSENFRMEPSLIPRKLYIPFMTLTVKAFCEYLYTGQIGNKWLLAPTLMDNLLISKFYRVPLLYDLISEILFGVIGKKEAYIIGEARKLKARYFKLLRGANIPIDSNYEFPMDEYDGFLDTVDDGYLDITLLKKASKIHADSVAMSLKKKSVTSNNSRNASIRKEGSTTAESVLEEGEKQEEIVSKDDEDESRTGSTSEEDEVDKEYGLVYLEAKDKSLPTIGPRSKSIFDRQGLAAIEKLEEEQNDHQVHSIVEGEDHENLITLDELVASDAPSDYAIDLIFETATLVTDMKMLLRTSNLKAMTAKFRKCKADIEKEMADIEYQLTQMPSGSRNLAMKSANQLKESQLQSKSSPIIPTVSTVTPSPLPSISGVPSPRLPQQQLPEAQLPKLTKSTSSLSRIASHTSFKALRSMTDVTPMEKSTSDKSFRGKLQQTMLSRTPTNRNEDQDSSSASSIKSSSKKRGIFGLLTGLKR</sequence>
<feature type="chain" id="PRO_0000422105" description="Negative regulator of sporulation MDS3">
    <location>
        <begin position="1"/>
        <end position="1383"/>
    </location>
</feature>
<feature type="repeat" description="Kelch 1" evidence="2">
    <location>
        <begin position="124"/>
        <end position="179"/>
    </location>
</feature>
<feature type="repeat" description="Kelch 2" evidence="2">
    <location>
        <begin position="199"/>
        <end position="246"/>
    </location>
</feature>
<feature type="repeat" description="Kelch 3" evidence="2">
    <location>
        <begin position="356"/>
        <end position="402"/>
    </location>
</feature>
<feature type="region of interest" description="Disordered" evidence="3">
    <location>
        <begin position="450"/>
        <end position="506"/>
    </location>
</feature>
<feature type="region of interest" description="Disordered" evidence="3">
    <location>
        <begin position="625"/>
        <end position="644"/>
    </location>
</feature>
<feature type="region of interest" description="Disordered" evidence="3">
    <location>
        <begin position="653"/>
        <end position="825"/>
    </location>
</feature>
<feature type="region of interest" description="Disordered" evidence="3">
    <location>
        <begin position="858"/>
        <end position="884"/>
    </location>
</feature>
<feature type="region of interest" description="Disordered" evidence="3">
    <location>
        <begin position="1063"/>
        <end position="1114"/>
    </location>
</feature>
<feature type="region of interest" description="Disordered" evidence="3">
    <location>
        <begin position="1251"/>
        <end position="1289"/>
    </location>
</feature>
<feature type="region of interest" description="Disordered" evidence="3">
    <location>
        <begin position="1321"/>
        <end position="1369"/>
    </location>
</feature>
<feature type="compositionally biased region" description="Polar residues" evidence="3">
    <location>
        <begin position="450"/>
        <end position="460"/>
    </location>
</feature>
<feature type="compositionally biased region" description="Low complexity" evidence="3">
    <location>
        <begin position="631"/>
        <end position="644"/>
    </location>
</feature>
<feature type="compositionally biased region" description="Basic and acidic residues" evidence="3">
    <location>
        <begin position="693"/>
        <end position="707"/>
    </location>
</feature>
<feature type="compositionally biased region" description="Low complexity" evidence="3">
    <location>
        <begin position="726"/>
        <end position="758"/>
    </location>
</feature>
<feature type="compositionally biased region" description="Low complexity" evidence="3">
    <location>
        <begin position="803"/>
        <end position="815"/>
    </location>
</feature>
<feature type="compositionally biased region" description="Low complexity" evidence="3">
    <location>
        <begin position="858"/>
        <end position="874"/>
    </location>
</feature>
<feature type="compositionally biased region" description="Basic and acidic residues" evidence="3">
    <location>
        <begin position="1084"/>
        <end position="1094"/>
    </location>
</feature>
<feature type="compositionally biased region" description="Low complexity" evidence="3">
    <location>
        <begin position="1251"/>
        <end position="1280"/>
    </location>
</feature>
<feature type="compositionally biased region" description="Polar residues" evidence="3">
    <location>
        <begin position="1341"/>
        <end position="1352"/>
    </location>
</feature>
<proteinExistence type="evidence at protein level"/>
<dbReference type="EMBL" id="CP017625">
    <property type="protein sequence ID" value="AOW28734.1"/>
    <property type="molecule type" value="Genomic_DNA"/>
</dbReference>
<dbReference type="RefSeq" id="XP_719857.2">
    <property type="nucleotide sequence ID" value="XM_714764.2"/>
</dbReference>
<dbReference type="FunCoup" id="Q5ADT1">
    <property type="interactions" value="306"/>
</dbReference>
<dbReference type="STRING" id="237561.Q5ADT1"/>
<dbReference type="EnsemblFungi" id="C3_07320W_A-T">
    <property type="protein sequence ID" value="C3_07320W_A-T-p1"/>
    <property type="gene ID" value="C3_07320W_A"/>
</dbReference>
<dbReference type="GeneID" id="3638464"/>
<dbReference type="KEGG" id="cal:CAALFM_C307320WA"/>
<dbReference type="CGD" id="CAL0000193099">
    <property type="gene designation" value="MDS3"/>
</dbReference>
<dbReference type="VEuPathDB" id="FungiDB:C3_07320W_A"/>
<dbReference type="eggNOG" id="ENOG502QSQ9">
    <property type="taxonomic scope" value="Eukaryota"/>
</dbReference>
<dbReference type="HOGENOM" id="CLU_401130_0_0_1"/>
<dbReference type="InParanoid" id="Q5ADT1"/>
<dbReference type="OMA" id="WQSHHKV"/>
<dbReference type="OrthoDB" id="10001928at2759"/>
<dbReference type="PRO" id="PR:Q5ADT1"/>
<dbReference type="Proteomes" id="UP000000559">
    <property type="component" value="Chromosome 3"/>
</dbReference>
<dbReference type="GO" id="GO:0005829">
    <property type="term" value="C:cytosol"/>
    <property type="evidence" value="ECO:0000318"/>
    <property type="project" value="GO_Central"/>
</dbReference>
<dbReference type="GO" id="GO:0004601">
    <property type="term" value="F:peroxidase activity"/>
    <property type="evidence" value="ECO:0000318"/>
    <property type="project" value="GO_Central"/>
</dbReference>
<dbReference type="GO" id="GO:0045454">
    <property type="term" value="P:cell redox homeostasis"/>
    <property type="evidence" value="ECO:0000318"/>
    <property type="project" value="GO_Central"/>
</dbReference>
<dbReference type="GO" id="GO:0034605">
    <property type="term" value="P:cellular response to heat"/>
    <property type="evidence" value="ECO:0000315"/>
    <property type="project" value="CGD"/>
</dbReference>
<dbReference type="GO" id="GO:0071467">
    <property type="term" value="P:cellular response to pH"/>
    <property type="evidence" value="ECO:0000315"/>
    <property type="project" value="CGD"/>
</dbReference>
<dbReference type="GO" id="GO:0001410">
    <property type="term" value="P:chlamydospore formation"/>
    <property type="evidence" value="ECO:0000315"/>
    <property type="project" value="CGD"/>
</dbReference>
<dbReference type="GO" id="GO:0030447">
    <property type="term" value="P:filamentous growth"/>
    <property type="evidence" value="ECO:0000315"/>
    <property type="project" value="CGD"/>
</dbReference>
<dbReference type="GO" id="GO:0044182">
    <property type="term" value="P:filamentous growth of a population of unicellular organisms"/>
    <property type="evidence" value="ECO:0000315"/>
    <property type="project" value="CGD"/>
</dbReference>
<dbReference type="GO" id="GO:0036171">
    <property type="term" value="P:filamentous growth of a population of unicellular organisms in response to chemical stimulus"/>
    <property type="evidence" value="ECO:0000315"/>
    <property type="project" value="CGD"/>
</dbReference>
<dbReference type="GO" id="GO:0036168">
    <property type="term" value="P:filamentous growth of a population of unicellular organisms in response to heat"/>
    <property type="evidence" value="ECO:0000315"/>
    <property type="project" value="CGD"/>
</dbReference>
<dbReference type="GO" id="GO:0036177">
    <property type="term" value="P:filamentous growth of a population of unicellular organisms in response to pH"/>
    <property type="evidence" value="ECO:0000315"/>
    <property type="project" value="CGD"/>
</dbReference>
<dbReference type="GO" id="GO:0036170">
    <property type="term" value="P:filamentous growth of a population of unicellular organisms in response to starvation"/>
    <property type="evidence" value="ECO:0000315"/>
    <property type="project" value="CGD"/>
</dbReference>
<dbReference type="GO" id="GO:0051321">
    <property type="term" value="P:meiotic cell cycle"/>
    <property type="evidence" value="ECO:0007669"/>
    <property type="project" value="UniProtKB-KW"/>
</dbReference>
<dbReference type="GO" id="GO:1900439">
    <property type="term" value="P:positive regulation of filamentous growth of a population of unicellular organisms in response to chemical stimulus"/>
    <property type="evidence" value="ECO:0000315"/>
    <property type="project" value="CGD"/>
</dbReference>
<dbReference type="GO" id="GO:0044011">
    <property type="term" value="P:single-species biofilm formation on inanimate substrate"/>
    <property type="evidence" value="ECO:0000315"/>
    <property type="project" value="CGD"/>
</dbReference>
<dbReference type="Gene3D" id="2.120.10.80">
    <property type="entry name" value="Kelch-type beta propeller"/>
    <property type="match status" value="1"/>
</dbReference>
<dbReference type="InterPro" id="IPR015915">
    <property type="entry name" value="Kelch-typ_b-propeller"/>
</dbReference>
<dbReference type="PANTHER" id="PTHR43503">
    <property type="entry name" value="MCG48959-RELATED"/>
    <property type="match status" value="1"/>
</dbReference>
<dbReference type="PANTHER" id="PTHR43503:SF2">
    <property type="entry name" value="NEGATIVE REGULATOR OF SPORULATION MDS3-RELATED"/>
    <property type="match status" value="1"/>
</dbReference>
<dbReference type="Pfam" id="PF13418">
    <property type="entry name" value="Kelch_4"/>
    <property type="match status" value="1"/>
</dbReference>
<dbReference type="SUPFAM" id="SSF117281">
    <property type="entry name" value="Kelch motif"/>
    <property type="match status" value="1"/>
</dbReference>